<proteinExistence type="inferred from homology"/>
<accession>Q4AAI1</accession>
<organism>
    <name type="scientific">Mesomycoplasma hyopneumoniae (strain J / ATCC 25934 / NCTC 10110)</name>
    <name type="common">Mycoplasma hyopneumoniae</name>
    <dbReference type="NCBI Taxonomy" id="262719"/>
    <lineage>
        <taxon>Bacteria</taxon>
        <taxon>Bacillati</taxon>
        <taxon>Mycoplasmatota</taxon>
        <taxon>Mycoplasmoidales</taxon>
        <taxon>Metamycoplasmataceae</taxon>
        <taxon>Mesomycoplasma</taxon>
    </lineage>
</organism>
<protein>
    <recommendedName>
        <fullName evidence="1">Guanylate kinase</fullName>
        <ecNumber evidence="1">2.7.4.8</ecNumber>
    </recommendedName>
    <alternativeName>
        <fullName evidence="1">GMP kinase</fullName>
    </alternativeName>
</protein>
<comment type="function">
    <text evidence="1">Essential for recycling GMP and indirectly, cGMP.</text>
</comment>
<comment type="catalytic activity">
    <reaction evidence="1">
        <text>GMP + ATP = GDP + ADP</text>
        <dbReference type="Rhea" id="RHEA:20780"/>
        <dbReference type="ChEBI" id="CHEBI:30616"/>
        <dbReference type="ChEBI" id="CHEBI:58115"/>
        <dbReference type="ChEBI" id="CHEBI:58189"/>
        <dbReference type="ChEBI" id="CHEBI:456216"/>
        <dbReference type="EC" id="2.7.4.8"/>
    </reaction>
</comment>
<comment type="subcellular location">
    <subcellularLocation>
        <location evidence="1">Cytoplasm</location>
    </subcellularLocation>
</comment>
<comment type="similarity">
    <text evidence="1">Belongs to the guanylate kinase family.</text>
</comment>
<gene>
    <name evidence="1" type="primary">gmk</name>
    <name type="ordered locus">MHJ_0149</name>
</gene>
<evidence type="ECO:0000255" key="1">
    <source>
        <dbReference type="HAMAP-Rule" id="MF_00328"/>
    </source>
</evidence>
<feature type="chain" id="PRO_0000266352" description="Guanylate kinase">
    <location>
        <begin position="1"/>
        <end position="197"/>
    </location>
</feature>
<feature type="domain" description="Guanylate kinase-like" evidence="1">
    <location>
        <begin position="6"/>
        <end position="191"/>
    </location>
</feature>
<feature type="binding site" evidence="1">
    <location>
        <begin position="13"/>
        <end position="20"/>
    </location>
    <ligand>
        <name>ATP</name>
        <dbReference type="ChEBI" id="CHEBI:30616"/>
    </ligand>
</feature>
<name>KGUA_MESHJ</name>
<sequence length="197" mass="22780">MKVKMSKLIILSGPSGVGKGTIESLLLKNKNLLIKLAISATTREKRRDEINGVNYFFLTVQEFKEKIENDEFIEWSCHFNNYYGTLKSQIKFIQSQNFIPLLEIDTTGAKNIIENYKNKGELSQLLTIFILPPSIESLKNRIQKRLTETNIQINQRLEKAKAEIKIKNLFKFQVVNDNLEECVAQIEKIISKEIQKT</sequence>
<dbReference type="EC" id="2.7.4.8" evidence="1"/>
<dbReference type="EMBL" id="AE017243">
    <property type="protein sequence ID" value="AAZ44240.1"/>
    <property type="molecule type" value="Genomic_DNA"/>
</dbReference>
<dbReference type="RefSeq" id="WP_011206066.1">
    <property type="nucleotide sequence ID" value="NC_007295.1"/>
</dbReference>
<dbReference type="SMR" id="Q4AAI1"/>
<dbReference type="GeneID" id="41334451"/>
<dbReference type="KEGG" id="mhj:MHJ_0149"/>
<dbReference type="eggNOG" id="COG0194">
    <property type="taxonomic scope" value="Bacteria"/>
</dbReference>
<dbReference type="HOGENOM" id="CLU_001715_1_1_14"/>
<dbReference type="OrthoDB" id="9808150at2"/>
<dbReference type="Proteomes" id="UP000000548">
    <property type="component" value="Chromosome"/>
</dbReference>
<dbReference type="GO" id="GO:0005829">
    <property type="term" value="C:cytosol"/>
    <property type="evidence" value="ECO:0007669"/>
    <property type="project" value="TreeGrafter"/>
</dbReference>
<dbReference type="GO" id="GO:0005524">
    <property type="term" value="F:ATP binding"/>
    <property type="evidence" value="ECO:0007669"/>
    <property type="project" value="UniProtKB-UniRule"/>
</dbReference>
<dbReference type="GO" id="GO:0004385">
    <property type="term" value="F:guanylate kinase activity"/>
    <property type="evidence" value="ECO:0007669"/>
    <property type="project" value="UniProtKB-UniRule"/>
</dbReference>
<dbReference type="CDD" id="cd00071">
    <property type="entry name" value="GMPK"/>
    <property type="match status" value="1"/>
</dbReference>
<dbReference type="FunFam" id="3.30.63.10:FF:000005">
    <property type="entry name" value="Guanylate kinase"/>
    <property type="match status" value="1"/>
</dbReference>
<dbReference type="Gene3D" id="3.30.63.10">
    <property type="entry name" value="Guanylate Kinase phosphate binding domain"/>
    <property type="match status" value="1"/>
</dbReference>
<dbReference type="Gene3D" id="3.40.50.300">
    <property type="entry name" value="P-loop containing nucleotide triphosphate hydrolases"/>
    <property type="match status" value="1"/>
</dbReference>
<dbReference type="HAMAP" id="MF_00328">
    <property type="entry name" value="Guanylate_kinase"/>
    <property type="match status" value="1"/>
</dbReference>
<dbReference type="InterPro" id="IPR008145">
    <property type="entry name" value="GK/Ca_channel_bsu"/>
</dbReference>
<dbReference type="InterPro" id="IPR008144">
    <property type="entry name" value="Guanylate_kin-like_dom"/>
</dbReference>
<dbReference type="InterPro" id="IPR017665">
    <property type="entry name" value="Guanylate_kinase"/>
</dbReference>
<dbReference type="InterPro" id="IPR020590">
    <property type="entry name" value="Guanylate_kinase_CS"/>
</dbReference>
<dbReference type="InterPro" id="IPR027417">
    <property type="entry name" value="P-loop_NTPase"/>
</dbReference>
<dbReference type="NCBIfam" id="TIGR03263">
    <property type="entry name" value="guanyl_kin"/>
    <property type="match status" value="1"/>
</dbReference>
<dbReference type="PANTHER" id="PTHR23117:SF13">
    <property type="entry name" value="GUANYLATE KINASE"/>
    <property type="match status" value="1"/>
</dbReference>
<dbReference type="PANTHER" id="PTHR23117">
    <property type="entry name" value="GUANYLATE KINASE-RELATED"/>
    <property type="match status" value="1"/>
</dbReference>
<dbReference type="Pfam" id="PF00625">
    <property type="entry name" value="Guanylate_kin"/>
    <property type="match status" value="1"/>
</dbReference>
<dbReference type="SMART" id="SM00072">
    <property type="entry name" value="GuKc"/>
    <property type="match status" value="1"/>
</dbReference>
<dbReference type="SUPFAM" id="SSF52540">
    <property type="entry name" value="P-loop containing nucleoside triphosphate hydrolases"/>
    <property type="match status" value="1"/>
</dbReference>
<dbReference type="PROSITE" id="PS00856">
    <property type="entry name" value="GUANYLATE_KINASE_1"/>
    <property type="match status" value="1"/>
</dbReference>
<dbReference type="PROSITE" id="PS50052">
    <property type="entry name" value="GUANYLATE_KINASE_2"/>
    <property type="match status" value="1"/>
</dbReference>
<keyword id="KW-0067">ATP-binding</keyword>
<keyword id="KW-0963">Cytoplasm</keyword>
<keyword id="KW-0418">Kinase</keyword>
<keyword id="KW-0547">Nucleotide-binding</keyword>
<keyword id="KW-0808">Transferase</keyword>
<reference key="1">
    <citation type="journal article" date="2005" name="J. Bacteriol.">
        <title>Swine and poultry pathogens: the complete genome sequences of two strains of Mycoplasma hyopneumoniae and a strain of Mycoplasma synoviae.</title>
        <authorList>
            <person name="Vasconcelos A.T.R."/>
            <person name="Ferreira H.B."/>
            <person name="Bizarro C.V."/>
            <person name="Bonatto S.L."/>
            <person name="Carvalho M.O."/>
            <person name="Pinto P.M."/>
            <person name="Almeida D.F."/>
            <person name="Almeida L.G.P."/>
            <person name="Almeida R."/>
            <person name="Alves-Junior L."/>
            <person name="Assuncao E.N."/>
            <person name="Azevedo V.A.C."/>
            <person name="Bogo M.R."/>
            <person name="Brigido M.M."/>
            <person name="Brocchi M."/>
            <person name="Burity H.A."/>
            <person name="Camargo A.A."/>
            <person name="Camargo S.S."/>
            <person name="Carepo M.S."/>
            <person name="Carraro D.M."/>
            <person name="de Mattos Cascardo J.C."/>
            <person name="Castro L.A."/>
            <person name="Cavalcanti G."/>
            <person name="Chemale G."/>
            <person name="Collevatti R.G."/>
            <person name="Cunha C.W."/>
            <person name="Dallagiovanna B."/>
            <person name="Dambros B.P."/>
            <person name="Dellagostin O.A."/>
            <person name="Falcao C."/>
            <person name="Fantinatti-Garboggini F."/>
            <person name="Felipe M.S.S."/>
            <person name="Fiorentin L."/>
            <person name="Franco G.R."/>
            <person name="Freitas N.S.A."/>
            <person name="Frias D."/>
            <person name="Grangeiro T.B."/>
            <person name="Grisard E.C."/>
            <person name="Guimaraes C.T."/>
            <person name="Hungria M."/>
            <person name="Jardim S.N."/>
            <person name="Krieger M.A."/>
            <person name="Laurino J.P."/>
            <person name="Lima L.F.A."/>
            <person name="Lopes M.I."/>
            <person name="Loreto E.L.S."/>
            <person name="Madeira H.M.F."/>
            <person name="Manfio G.P."/>
            <person name="Maranhao A.Q."/>
            <person name="Martinkovics C.T."/>
            <person name="Medeiros S.R.B."/>
            <person name="Moreira M.A.M."/>
            <person name="Neiva M."/>
            <person name="Ramalho-Neto C.E."/>
            <person name="Nicolas M.F."/>
            <person name="Oliveira S.C."/>
            <person name="Paixao R.F.C."/>
            <person name="Pedrosa F.O."/>
            <person name="Pena S.D.J."/>
            <person name="Pereira M."/>
            <person name="Pereira-Ferrari L."/>
            <person name="Piffer I."/>
            <person name="Pinto L.S."/>
            <person name="Potrich D.P."/>
            <person name="Salim A.C.M."/>
            <person name="Santos F.R."/>
            <person name="Schmitt R."/>
            <person name="Schneider M.P.C."/>
            <person name="Schrank A."/>
            <person name="Schrank I.S."/>
            <person name="Schuck A.F."/>
            <person name="Seuanez H.N."/>
            <person name="Silva D.W."/>
            <person name="Silva R."/>
            <person name="Silva S.C."/>
            <person name="Soares C.M.A."/>
            <person name="Souza K.R.L."/>
            <person name="Souza R.C."/>
            <person name="Staats C.C."/>
            <person name="Steffens M.B.R."/>
            <person name="Teixeira S.M.R."/>
            <person name="Urmenyi T.P."/>
            <person name="Vainstein M.H."/>
            <person name="Zuccherato L.W."/>
            <person name="Simpson A.J.G."/>
            <person name="Zaha A."/>
        </authorList>
    </citation>
    <scope>NUCLEOTIDE SEQUENCE [LARGE SCALE GENOMIC DNA]</scope>
    <source>
        <strain>J / ATCC 25934 / NCTC 10110</strain>
    </source>
</reference>